<organism>
    <name type="scientific">Vibrio cholerae serotype O1 (strain ATCC 39541 / Classical Ogawa 395 / O395)</name>
    <dbReference type="NCBI Taxonomy" id="345073"/>
    <lineage>
        <taxon>Bacteria</taxon>
        <taxon>Pseudomonadati</taxon>
        <taxon>Pseudomonadota</taxon>
        <taxon>Gammaproteobacteria</taxon>
        <taxon>Vibrionales</taxon>
        <taxon>Vibrionaceae</taxon>
        <taxon>Vibrio</taxon>
    </lineage>
</organism>
<name>MUTH_VIBC3</name>
<evidence type="ECO:0000255" key="1">
    <source>
        <dbReference type="HAMAP-Rule" id="MF_00759"/>
    </source>
</evidence>
<comment type="function">
    <text evidence="1">Sequence-specific endonuclease that cleaves unmethylated GATC sequences. It is involved in DNA mismatch repair.</text>
</comment>
<comment type="subcellular location">
    <subcellularLocation>
        <location evidence="1">Cytoplasm</location>
    </subcellularLocation>
</comment>
<comment type="similarity">
    <text evidence="1">Belongs to the MutH family.</text>
</comment>
<dbReference type="EMBL" id="CP000627">
    <property type="protein sequence ID" value="ABQ20236.1"/>
    <property type="molecule type" value="Genomic_DNA"/>
</dbReference>
<dbReference type="EMBL" id="CP001235">
    <property type="protein sequence ID" value="ACP08703.1"/>
    <property type="molecule type" value="Genomic_DNA"/>
</dbReference>
<dbReference type="RefSeq" id="WP_000801224.1">
    <property type="nucleotide sequence ID" value="NZ_JAACZH010000006.1"/>
</dbReference>
<dbReference type="SMR" id="A5F8Z6"/>
<dbReference type="KEGG" id="vco:VC0395_A0200"/>
<dbReference type="KEGG" id="vcr:VC395_0685"/>
<dbReference type="PATRIC" id="fig|345073.21.peg.668"/>
<dbReference type="eggNOG" id="COG3066">
    <property type="taxonomic scope" value="Bacteria"/>
</dbReference>
<dbReference type="HOGENOM" id="CLU_086669_0_0_6"/>
<dbReference type="OrthoDB" id="5634909at2"/>
<dbReference type="Proteomes" id="UP000000249">
    <property type="component" value="Chromosome 2"/>
</dbReference>
<dbReference type="GO" id="GO:0005737">
    <property type="term" value="C:cytoplasm"/>
    <property type="evidence" value="ECO:0007669"/>
    <property type="project" value="UniProtKB-SubCell"/>
</dbReference>
<dbReference type="GO" id="GO:0003677">
    <property type="term" value="F:DNA binding"/>
    <property type="evidence" value="ECO:0007669"/>
    <property type="project" value="InterPro"/>
</dbReference>
<dbReference type="GO" id="GO:0004519">
    <property type="term" value="F:endonuclease activity"/>
    <property type="evidence" value="ECO:0007669"/>
    <property type="project" value="UniProtKB-UniRule"/>
</dbReference>
<dbReference type="GO" id="GO:0006304">
    <property type="term" value="P:DNA modification"/>
    <property type="evidence" value="ECO:0007669"/>
    <property type="project" value="InterPro"/>
</dbReference>
<dbReference type="GO" id="GO:0006298">
    <property type="term" value="P:mismatch repair"/>
    <property type="evidence" value="ECO:0007669"/>
    <property type="project" value="UniProtKB-UniRule"/>
</dbReference>
<dbReference type="CDD" id="cd00583">
    <property type="entry name" value="MutH-like"/>
    <property type="match status" value="1"/>
</dbReference>
<dbReference type="FunFam" id="3.40.600.10:FF:000001">
    <property type="entry name" value="DNA mismatch repair protein MutH"/>
    <property type="match status" value="1"/>
</dbReference>
<dbReference type="Gene3D" id="3.40.600.10">
    <property type="entry name" value="DNA mismatch repair MutH/Restriction endonuclease, type II"/>
    <property type="match status" value="1"/>
</dbReference>
<dbReference type="HAMAP" id="MF_00759">
    <property type="entry name" value="MutH"/>
    <property type="match status" value="1"/>
</dbReference>
<dbReference type="InterPro" id="IPR004230">
    <property type="entry name" value="DNA_mismatch_repair_MutH"/>
</dbReference>
<dbReference type="InterPro" id="IPR011337">
    <property type="entry name" value="DNA_rep_MutH/RE_typeII_Sau3AI"/>
</dbReference>
<dbReference type="InterPro" id="IPR037057">
    <property type="entry name" value="DNA_rep_MutH/T2_RE_sf"/>
</dbReference>
<dbReference type="InterPro" id="IPR011335">
    <property type="entry name" value="Restrct_endonuc-II-like"/>
</dbReference>
<dbReference type="NCBIfam" id="TIGR02248">
    <property type="entry name" value="mutH_TIGR"/>
    <property type="match status" value="1"/>
</dbReference>
<dbReference type="NCBIfam" id="NF003458">
    <property type="entry name" value="PRK05070.1"/>
    <property type="match status" value="1"/>
</dbReference>
<dbReference type="Pfam" id="PF02976">
    <property type="entry name" value="MutH"/>
    <property type="match status" value="1"/>
</dbReference>
<dbReference type="SMART" id="SM00927">
    <property type="entry name" value="MutH"/>
    <property type="match status" value="1"/>
</dbReference>
<dbReference type="SUPFAM" id="SSF52980">
    <property type="entry name" value="Restriction endonuclease-like"/>
    <property type="match status" value="1"/>
</dbReference>
<accession>A5F8Z6</accession>
<accession>C3LXX9</accession>
<keyword id="KW-0963">Cytoplasm</keyword>
<keyword id="KW-0227">DNA damage</keyword>
<keyword id="KW-0234">DNA repair</keyword>
<keyword id="KW-0255">Endonuclease</keyword>
<keyword id="KW-0378">Hydrolase</keyword>
<keyword id="KW-0540">Nuclease</keyword>
<reference key="1">
    <citation type="submission" date="2007-03" db="EMBL/GenBank/DDBJ databases">
        <authorList>
            <person name="Heidelberg J."/>
        </authorList>
    </citation>
    <scope>NUCLEOTIDE SEQUENCE [LARGE SCALE GENOMIC DNA]</scope>
    <source>
        <strain>ATCC 39541 / Classical Ogawa 395 / O395</strain>
    </source>
</reference>
<reference key="2">
    <citation type="journal article" date="2008" name="PLoS ONE">
        <title>A recalibrated molecular clock and independent origins for the cholera pandemic clones.</title>
        <authorList>
            <person name="Feng L."/>
            <person name="Reeves P.R."/>
            <person name="Lan R."/>
            <person name="Ren Y."/>
            <person name="Gao C."/>
            <person name="Zhou Z."/>
            <person name="Ren Y."/>
            <person name="Cheng J."/>
            <person name="Wang W."/>
            <person name="Wang J."/>
            <person name="Qian W."/>
            <person name="Li D."/>
            <person name="Wang L."/>
        </authorList>
    </citation>
    <scope>NUCLEOTIDE SEQUENCE [LARGE SCALE GENOMIC DNA]</scope>
    <source>
        <strain>ATCC 39541 / Classical Ogawa 395 / O395</strain>
    </source>
</reference>
<protein>
    <recommendedName>
        <fullName evidence="1">DNA mismatch repair protein MutH</fullName>
    </recommendedName>
    <alternativeName>
        <fullName evidence="1">Methyl-directed mismatch repair protein</fullName>
    </alternativeName>
</protein>
<gene>
    <name evidence="1" type="primary">mutH</name>
    <name type="ordered locus">VC0395_A0200</name>
    <name type="ordered locus">VC395_0685</name>
</gene>
<feature type="chain" id="PRO_1000072828" description="DNA mismatch repair protein MutH">
    <location>
        <begin position="1"/>
        <end position="221"/>
    </location>
</feature>
<proteinExistence type="inferred from homology"/>
<sequence>MKPAPTTQQELLTRAQQIAGLSFAELADEAGMTVPPDLRKDKGWVGQLLEWHLGATAGSRPQQDFEHLGIELKSIPISYTGKPLETTFVCVAPLTGVHGLTWEQSHVRNKLSKVLWIPVQGEREIPLAERCVGYPLLWSPSPEEEAQLKADWEELMELIVLGKVAQITAKHGEVLQLRPKAANGRALTEAYGANGRPIKTLPRGFYLRTQFTAQILQRYYA</sequence>